<sequence>MRLTDIEIEQALDNGTIVIEPRPGIEAISGVSVDVRLGGQFRVFKDHTAPYIDLSGPSVEMQAALDRVMSEIIEIPDGEAFFLHPGELALAVTYESVTLPADIVGWLDGRSSLARLGLMVHVTAHRIDPGWQGKIVLEFYNSGKLPLALRPRMTIGALNFERLNHAVARPYNTRKSAKYKDQQEAVASRISQD</sequence>
<dbReference type="EC" id="3.5.4.13" evidence="1"/>
<dbReference type="EMBL" id="CP000753">
    <property type="protein sequence ID" value="ABS08592.1"/>
    <property type="molecule type" value="Genomic_DNA"/>
</dbReference>
<dbReference type="RefSeq" id="WP_006081925.1">
    <property type="nucleotide sequence ID" value="NC_009665.1"/>
</dbReference>
<dbReference type="SMR" id="A6WP53"/>
<dbReference type="GeneID" id="11772674"/>
<dbReference type="KEGG" id="sbm:Shew185_2455"/>
<dbReference type="HOGENOM" id="CLU_087476_2_0_6"/>
<dbReference type="UniPathway" id="UPA00610">
    <property type="reaction ID" value="UER00665"/>
</dbReference>
<dbReference type="GO" id="GO:0008829">
    <property type="term" value="F:dCTP deaminase activity"/>
    <property type="evidence" value="ECO:0007669"/>
    <property type="project" value="UniProtKB-UniRule"/>
</dbReference>
<dbReference type="GO" id="GO:0000166">
    <property type="term" value="F:nucleotide binding"/>
    <property type="evidence" value="ECO:0007669"/>
    <property type="project" value="UniProtKB-KW"/>
</dbReference>
<dbReference type="GO" id="GO:0006226">
    <property type="term" value="P:dUMP biosynthetic process"/>
    <property type="evidence" value="ECO:0007669"/>
    <property type="project" value="UniProtKB-UniPathway"/>
</dbReference>
<dbReference type="GO" id="GO:0006229">
    <property type="term" value="P:dUTP biosynthetic process"/>
    <property type="evidence" value="ECO:0007669"/>
    <property type="project" value="UniProtKB-UniRule"/>
</dbReference>
<dbReference type="GO" id="GO:0015949">
    <property type="term" value="P:nucleobase-containing small molecule interconversion"/>
    <property type="evidence" value="ECO:0007669"/>
    <property type="project" value="TreeGrafter"/>
</dbReference>
<dbReference type="CDD" id="cd07557">
    <property type="entry name" value="trimeric_dUTPase"/>
    <property type="match status" value="1"/>
</dbReference>
<dbReference type="FunFam" id="2.70.40.10:FF:000003">
    <property type="entry name" value="dCTP deaminase"/>
    <property type="match status" value="1"/>
</dbReference>
<dbReference type="Gene3D" id="2.70.40.10">
    <property type="match status" value="1"/>
</dbReference>
<dbReference type="HAMAP" id="MF_00146">
    <property type="entry name" value="dCTP_deaminase"/>
    <property type="match status" value="1"/>
</dbReference>
<dbReference type="InterPro" id="IPR011962">
    <property type="entry name" value="dCTP_deaminase"/>
</dbReference>
<dbReference type="InterPro" id="IPR036157">
    <property type="entry name" value="dUTPase-like_sf"/>
</dbReference>
<dbReference type="InterPro" id="IPR033704">
    <property type="entry name" value="dUTPase_trimeric"/>
</dbReference>
<dbReference type="NCBIfam" id="TIGR02274">
    <property type="entry name" value="dCTP_deam"/>
    <property type="match status" value="1"/>
</dbReference>
<dbReference type="PANTHER" id="PTHR42680">
    <property type="entry name" value="DCTP DEAMINASE"/>
    <property type="match status" value="1"/>
</dbReference>
<dbReference type="PANTHER" id="PTHR42680:SF3">
    <property type="entry name" value="DCTP DEAMINASE"/>
    <property type="match status" value="1"/>
</dbReference>
<dbReference type="Pfam" id="PF22769">
    <property type="entry name" value="DCD"/>
    <property type="match status" value="1"/>
</dbReference>
<dbReference type="SUPFAM" id="SSF51283">
    <property type="entry name" value="dUTPase-like"/>
    <property type="match status" value="1"/>
</dbReference>
<gene>
    <name evidence="1" type="primary">dcd</name>
    <name type="ordered locus">Shew185_2455</name>
</gene>
<feature type="chain" id="PRO_1000009808" description="dCTP deaminase">
    <location>
        <begin position="1"/>
        <end position="193"/>
    </location>
</feature>
<feature type="region of interest" description="Disordered" evidence="2">
    <location>
        <begin position="174"/>
        <end position="193"/>
    </location>
</feature>
<feature type="active site" description="Proton donor/acceptor" evidence="1">
    <location>
        <position position="138"/>
    </location>
</feature>
<feature type="binding site" evidence="1">
    <location>
        <begin position="110"/>
        <end position="115"/>
    </location>
    <ligand>
        <name>dCTP</name>
        <dbReference type="ChEBI" id="CHEBI:61481"/>
    </ligand>
</feature>
<feature type="binding site" evidence="1">
    <location>
        <position position="128"/>
    </location>
    <ligand>
        <name>dCTP</name>
        <dbReference type="ChEBI" id="CHEBI:61481"/>
    </ligand>
</feature>
<feature type="binding site" evidence="1">
    <location>
        <begin position="136"/>
        <end position="138"/>
    </location>
    <ligand>
        <name>dCTP</name>
        <dbReference type="ChEBI" id="CHEBI:61481"/>
    </ligand>
</feature>
<feature type="binding site" evidence="1">
    <location>
        <position position="171"/>
    </location>
    <ligand>
        <name>dCTP</name>
        <dbReference type="ChEBI" id="CHEBI:61481"/>
    </ligand>
</feature>
<feature type="binding site" evidence="1">
    <location>
        <position position="178"/>
    </location>
    <ligand>
        <name>dCTP</name>
        <dbReference type="ChEBI" id="CHEBI:61481"/>
    </ligand>
</feature>
<feature type="binding site" evidence="1">
    <location>
        <position position="182"/>
    </location>
    <ligand>
        <name>dCTP</name>
        <dbReference type="ChEBI" id="CHEBI:61481"/>
    </ligand>
</feature>
<protein>
    <recommendedName>
        <fullName evidence="1">dCTP deaminase</fullName>
        <ecNumber evidence="1">3.5.4.13</ecNumber>
    </recommendedName>
    <alternativeName>
        <fullName evidence="1">Deoxycytidine triphosphate deaminase</fullName>
    </alternativeName>
</protein>
<keyword id="KW-0378">Hydrolase</keyword>
<keyword id="KW-0546">Nucleotide metabolism</keyword>
<keyword id="KW-0547">Nucleotide-binding</keyword>
<name>DCD_SHEB8</name>
<proteinExistence type="inferred from homology"/>
<evidence type="ECO:0000255" key="1">
    <source>
        <dbReference type="HAMAP-Rule" id="MF_00146"/>
    </source>
</evidence>
<evidence type="ECO:0000256" key="2">
    <source>
        <dbReference type="SAM" id="MobiDB-lite"/>
    </source>
</evidence>
<comment type="function">
    <text evidence="1">Catalyzes the deamination of dCTP to dUTP.</text>
</comment>
<comment type="catalytic activity">
    <reaction evidence="1">
        <text>dCTP + H2O + H(+) = dUTP + NH4(+)</text>
        <dbReference type="Rhea" id="RHEA:22680"/>
        <dbReference type="ChEBI" id="CHEBI:15377"/>
        <dbReference type="ChEBI" id="CHEBI:15378"/>
        <dbReference type="ChEBI" id="CHEBI:28938"/>
        <dbReference type="ChEBI" id="CHEBI:61481"/>
        <dbReference type="ChEBI" id="CHEBI:61555"/>
        <dbReference type="EC" id="3.5.4.13"/>
    </reaction>
</comment>
<comment type="pathway">
    <text evidence="1">Pyrimidine metabolism; dUMP biosynthesis; dUMP from dCTP (dUTP route): step 1/2.</text>
</comment>
<comment type="subunit">
    <text evidence="1">Homotrimer.</text>
</comment>
<comment type="similarity">
    <text evidence="1">Belongs to the dCTP deaminase family.</text>
</comment>
<organism>
    <name type="scientific">Shewanella baltica (strain OS185)</name>
    <dbReference type="NCBI Taxonomy" id="402882"/>
    <lineage>
        <taxon>Bacteria</taxon>
        <taxon>Pseudomonadati</taxon>
        <taxon>Pseudomonadota</taxon>
        <taxon>Gammaproteobacteria</taxon>
        <taxon>Alteromonadales</taxon>
        <taxon>Shewanellaceae</taxon>
        <taxon>Shewanella</taxon>
    </lineage>
</organism>
<accession>A6WP53</accession>
<reference key="1">
    <citation type="submission" date="2007-07" db="EMBL/GenBank/DDBJ databases">
        <title>Complete sequence of chromosome of Shewanella baltica OS185.</title>
        <authorList>
            <consortium name="US DOE Joint Genome Institute"/>
            <person name="Copeland A."/>
            <person name="Lucas S."/>
            <person name="Lapidus A."/>
            <person name="Barry K."/>
            <person name="Glavina del Rio T."/>
            <person name="Dalin E."/>
            <person name="Tice H."/>
            <person name="Pitluck S."/>
            <person name="Sims D."/>
            <person name="Brettin T."/>
            <person name="Bruce D."/>
            <person name="Detter J.C."/>
            <person name="Han C."/>
            <person name="Schmutz J."/>
            <person name="Larimer F."/>
            <person name="Land M."/>
            <person name="Hauser L."/>
            <person name="Kyrpides N."/>
            <person name="Mikhailova N."/>
            <person name="Brettar I."/>
            <person name="Rodrigues J."/>
            <person name="Konstantinidis K."/>
            <person name="Tiedje J."/>
            <person name="Richardson P."/>
        </authorList>
    </citation>
    <scope>NUCLEOTIDE SEQUENCE [LARGE SCALE GENOMIC DNA]</scope>
    <source>
        <strain>OS185</strain>
    </source>
</reference>